<evidence type="ECO:0000269" key="1">
    <source>
    </source>
</evidence>
<comment type="function">
    <text evidence="1">Plays a role in primary oral infection of the host.</text>
</comment>
<comment type="subcellular location">
    <subcellularLocation>
        <location evidence="1">Host nucleus</location>
    </subcellularLocation>
    <subcellularLocation>
        <location evidence="1">Virion</location>
    </subcellularLocation>
</comment>
<proteinExistence type="predicted"/>
<reference key="1">
    <citation type="journal article" date="1994" name="Virology">
        <title>The complete DNA sequence of Autographa californica nuclear polyhedrosis virus.</title>
        <authorList>
            <person name="Ayres M.D."/>
            <person name="Howard S.C."/>
            <person name="Kuzio J."/>
            <person name="Lopez-Ferber M."/>
            <person name="Possee R.D."/>
        </authorList>
    </citation>
    <scope>NUCLEOTIDE SEQUENCE [LARGE SCALE GENOMIC DNA]</scope>
    <source>
        <strain>C6</strain>
    </source>
</reference>
<reference key="2">
    <citation type="journal article" date="2004" name="J. Virol.">
        <title>Characterization of two Autographa californica nucleopolyhedrovirus proteins, Ac145 and Ac150, which affect oral infectivity in a host-dependent manner.</title>
        <authorList>
            <person name="Lapointe R."/>
            <person name="Popham H.J."/>
            <person name="Straschil U."/>
            <person name="Goulding D."/>
            <person name="O'Reilly D.R."/>
            <person name="Olszewski J.A."/>
        </authorList>
    </citation>
    <scope>FUNCTION</scope>
    <scope>SUBCELLULAR LOCATION</scope>
</reference>
<organism>
    <name type="scientific">Autographa californica nuclear polyhedrosis virus</name>
    <name type="common">AcMNPV</name>
    <dbReference type="NCBI Taxonomy" id="46015"/>
    <lineage>
        <taxon>Viruses</taxon>
        <taxon>Viruses incertae sedis</taxon>
        <taxon>Naldaviricetes</taxon>
        <taxon>Lefavirales</taxon>
        <taxon>Baculoviridae</taxon>
        <taxon>Alphabaculovirus</taxon>
        <taxon>Alphabaculovirus aucalifornicae</taxon>
    </lineage>
</organism>
<protein>
    <recommendedName>
        <fullName>Protein AC145</fullName>
    </recommendedName>
</protein>
<keyword id="KW-1048">Host nucleus</keyword>
<keyword id="KW-1185">Reference proteome</keyword>
<keyword id="KW-0946">Virion</keyword>
<sequence>MNQIHLKCHSDKICPKGYFGLNADPYDCTAYYLCPHKVQMFCELNHEFDLDSASCKPIVYDHTGSGCTARMYRNLLL</sequence>
<dbReference type="EMBL" id="L22858">
    <property type="protein sequence ID" value="AAA66775.1"/>
    <property type="molecule type" value="Genomic_DNA"/>
</dbReference>
<dbReference type="PIR" id="C72868">
    <property type="entry name" value="C72868"/>
</dbReference>
<dbReference type="RefSeq" id="NP_054176.1">
    <property type="nucleotide sequence ID" value="NC_001623.1"/>
</dbReference>
<dbReference type="SMR" id="P41703"/>
<dbReference type="GeneID" id="1403978"/>
<dbReference type="KEGG" id="vg:1403978"/>
<dbReference type="OrthoDB" id="24819at10239"/>
<dbReference type="Proteomes" id="UP000008292">
    <property type="component" value="Segment"/>
</dbReference>
<dbReference type="GO" id="GO:0005576">
    <property type="term" value="C:extracellular region"/>
    <property type="evidence" value="ECO:0007669"/>
    <property type="project" value="InterPro"/>
</dbReference>
<dbReference type="GO" id="GO:0042025">
    <property type="term" value="C:host cell nucleus"/>
    <property type="evidence" value="ECO:0007669"/>
    <property type="project" value="UniProtKB-SubCell"/>
</dbReference>
<dbReference type="GO" id="GO:0044423">
    <property type="term" value="C:virion component"/>
    <property type="evidence" value="ECO:0007669"/>
    <property type="project" value="UniProtKB-KW"/>
</dbReference>
<dbReference type="GO" id="GO:0008061">
    <property type="term" value="F:chitin binding"/>
    <property type="evidence" value="ECO:0007669"/>
    <property type="project" value="InterPro"/>
</dbReference>
<dbReference type="InterPro" id="IPR002557">
    <property type="entry name" value="Chitin-bd_dom"/>
</dbReference>
<dbReference type="InterPro" id="IPR036508">
    <property type="entry name" value="Chitin-bd_dom_sf"/>
</dbReference>
<dbReference type="SMART" id="SM00494">
    <property type="entry name" value="ChtBD2"/>
    <property type="match status" value="1"/>
</dbReference>
<dbReference type="SUPFAM" id="SSF57625">
    <property type="entry name" value="Invertebrate chitin-binding proteins"/>
    <property type="match status" value="1"/>
</dbReference>
<organismHost>
    <name type="scientific">Lepidoptera</name>
    <name type="common">butterflies and moths</name>
    <dbReference type="NCBI Taxonomy" id="7088"/>
</organismHost>
<feature type="chain" id="PRO_0000133069" description="Protein AC145">
    <location>
        <begin position="1"/>
        <end position="77"/>
    </location>
</feature>
<accession>P41703</accession>
<name>AC145_NPVAC</name>